<comment type="function">
    <text evidence="4 5 6">Catalyzes the oxidative deamination of primary and some secondary amine such as neurotransmitters, with concomitant reduction of oxygen to hydrogen peroxide and has important functions in the metabolism of neuroactive and vasoactive amines in the central nervous system and peripheral tissues (PubMed:18391214, PubMed:9162023). Preferentially oxidizes serotonin (PubMed:20493079). Also catalyzes the oxidative deamination of kynuramine to 3-(2-aminophenyl)-3-oxopropanal that can spontaneously condense to 4-hydroxyquinoline (PubMed:18391214).</text>
</comment>
<comment type="catalytic activity">
    <reaction evidence="5">
        <text>a secondary aliphatic amine + O2 + H2O = a primary amine + an aldehyde + H2O2</text>
        <dbReference type="Rhea" id="RHEA:26414"/>
        <dbReference type="ChEBI" id="CHEBI:15377"/>
        <dbReference type="ChEBI" id="CHEBI:15379"/>
        <dbReference type="ChEBI" id="CHEBI:16240"/>
        <dbReference type="ChEBI" id="CHEBI:17478"/>
        <dbReference type="ChEBI" id="CHEBI:58855"/>
        <dbReference type="ChEBI" id="CHEBI:65296"/>
        <dbReference type="EC" id="1.4.3.4"/>
    </reaction>
</comment>
<comment type="catalytic activity">
    <reaction evidence="4 5 6">
        <text>a primary methyl amine + O2 + H2O = an aldehyde + H2O2 + NH4(+)</text>
        <dbReference type="Rhea" id="RHEA:16153"/>
        <dbReference type="ChEBI" id="CHEBI:15377"/>
        <dbReference type="ChEBI" id="CHEBI:15379"/>
        <dbReference type="ChEBI" id="CHEBI:16240"/>
        <dbReference type="ChEBI" id="CHEBI:17478"/>
        <dbReference type="ChEBI" id="CHEBI:28938"/>
        <dbReference type="ChEBI" id="CHEBI:228804"/>
        <dbReference type="EC" id="1.4.3.21"/>
    </reaction>
</comment>
<comment type="catalytic activity">
    <reaction evidence="5">
        <text>(R)-adrenaline + O2 + H2O = (R)-3,4-dihydroxymandelaldehyde + methylamine + H2O2</text>
        <dbReference type="Rhea" id="RHEA:51168"/>
        <dbReference type="ChEBI" id="CHEBI:15377"/>
        <dbReference type="ChEBI" id="CHEBI:15379"/>
        <dbReference type="ChEBI" id="CHEBI:16240"/>
        <dbReference type="ChEBI" id="CHEBI:59338"/>
        <dbReference type="ChEBI" id="CHEBI:71406"/>
        <dbReference type="ChEBI" id="CHEBI:180943"/>
    </reaction>
</comment>
<comment type="catalytic activity">
    <reaction evidence="5">
        <text>dopamine + O2 + H2O = 3,4-dihydroxyphenylacetaldehyde + H2O2 + NH4(+)</text>
        <dbReference type="Rhea" id="RHEA:27946"/>
        <dbReference type="ChEBI" id="CHEBI:15377"/>
        <dbReference type="ChEBI" id="CHEBI:15379"/>
        <dbReference type="ChEBI" id="CHEBI:16240"/>
        <dbReference type="ChEBI" id="CHEBI:27978"/>
        <dbReference type="ChEBI" id="CHEBI:28938"/>
        <dbReference type="ChEBI" id="CHEBI:59905"/>
    </reaction>
</comment>
<comment type="catalytic activity">
    <reaction evidence="5 6">
        <text>tyramine + O2 + H2O = (4-hydroxyphenyl)acetaldehyde + H2O2 + NH4(+)</text>
        <dbReference type="Rhea" id="RHEA:30591"/>
        <dbReference type="ChEBI" id="CHEBI:15377"/>
        <dbReference type="ChEBI" id="CHEBI:15379"/>
        <dbReference type="ChEBI" id="CHEBI:15621"/>
        <dbReference type="ChEBI" id="CHEBI:16240"/>
        <dbReference type="ChEBI" id="CHEBI:28938"/>
        <dbReference type="ChEBI" id="CHEBI:327995"/>
    </reaction>
</comment>
<comment type="catalytic activity">
    <reaction evidence="5">
        <text>(R)-noradrenaline + O2 + H2O = (R)-3,4-dihydroxymandelaldehyde + H2O2 + NH4(+)</text>
        <dbReference type="Rhea" id="RHEA:69076"/>
        <dbReference type="ChEBI" id="CHEBI:15377"/>
        <dbReference type="ChEBI" id="CHEBI:15379"/>
        <dbReference type="ChEBI" id="CHEBI:16240"/>
        <dbReference type="ChEBI" id="CHEBI:28938"/>
        <dbReference type="ChEBI" id="CHEBI:72587"/>
        <dbReference type="ChEBI" id="CHEBI:180943"/>
    </reaction>
</comment>
<comment type="catalytic activity">
    <reaction evidence="5 6">
        <text>serotonin + O2 + H2O = (5-hydroxyindol-3-yl)acetaldehyde + H2O2 + NH4(+)</text>
        <dbReference type="Rhea" id="RHEA:69072"/>
        <dbReference type="ChEBI" id="CHEBI:15377"/>
        <dbReference type="ChEBI" id="CHEBI:15379"/>
        <dbReference type="ChEBI" id="CHEBI:16240"/>
        <dbReference type="ChEBI" id="CHEBI:28938"/>
        <dbReference type="ChEBI" id="CHEBI:50157"/>
        <dbReference type="ChEBI" id="CHEBI:350546"/>
    </reaction>
</comment>
<comment type="catalytic activity">
    <reaction evidence="4">
        <text>kynuramine + O2 + H2O = 3-(2-aminophenyl)-3-oxopropanal + H2O2 + NH4(+)</text>
        <dbReference type="Rhea" id="RHEA:59596"/>
        <dbReference type="ChEBI" id="CHEBI:15377"/>
        <dbReference type="ChEBI" id="CHEBI:15379"/>
        <dbReference type="ChEBI" id="CHEBI:16240"/>
        <dbReference type="ChEBI" id="CHEBI:28938"/>
        <dbReference type="ChEBI" id="CHEBI:180898"/>
        <dbReference type="ChEBI" id="CHEBI:180899"/>
    </reaction>
    <physiologicalReaction direction="left-to-right" evidence="8">
        <dbReference type="Rhea" id="RHEA:59597"/>
    </physiologicalReaction>
</comment>
<comment type="catalytic activity">
    <reaction evidence="6">
        <text>tryptamine + O2 + H2O = indole-3-acetaldehyde + H2O2 + NH4(+)</text>
        <dbReference type="Rhea" id="RHEA:59416"/>
        <dbReference type="ChEBI" id="CHEBI:15377"/>
        <dbReference type="ChEBI" id="CHEBI:15379"/>
        <dbReference type="ChEBI" id="CHEBI:16240"/>
        <dbReference type="ChEBI" id="CHEBI:18086"/>
        <dbReference type="ChEBI" id="CHEBI:28938"/>
        <dbReference type="ChEBI" id="CHEBI:57887"/>
    </reaction>
</comment>
<comment type="catalytic activity">
    <reaction evidence="5 6">
        <text>2-phenylethylamine + O2 + H2O = 2-phenylacetaldehyde + H2O2 + NH4(+)</text>
        <dbReference type="Rhea" id="RHEA:25265"/>
        <dbReference type="ChEBI" id="CHEBI:15377"/>
        <dbReference type="ChEBI" id="CHEBI:15379"/>
        <dbReference type="ChEBI" id="CHEBI:16240"/>
        <dbReference type="ChEBI" id="CHEBI:16424"/>
        <dbReference type="ChEBI" id="CHEBI:28938"/>
        <dbReference type="ChEBI" id="CHEBI:225237"/>
    </reaction>
</comment>
<comment type="cofactor">
    <cofactor evidence="3">
        <name>FAD</name>
        <dbReference type="ChEBI" id="CHEBI:57692"/>
    </cofactor>
</comment>
<comment type="biophysicochemical properties">
    <kinetics>
        <KM evidence="5">610 uM for (R)-adrenaline</KM>
        <KM evidence="5">150 uM for dopamine</KM>
        <KM evidence="5">340 uM for serotonin</KM>
        <KM evidence="5">582 uM for (R)-noradrenaline</KM>
        <KM evidence="5">327 uM for 2-phenylethylamine</KM>
        <KM evidence="5">116 uM for tyramine</KM>
        <KM evidence="4">0.096 mM for kynuramine (with the detergent-solubilized form)</KM>
        <KM evidence="4">0.026 mM for kynuramine (with the membrane-bound form)</KM>
        <KM evidence="6">0.31 mM for serotonin</KM>
        <KM evidence="6">0.4 mM for tyramine</KM>
        <KM evidence="5">0.23 mM for tryptamine</KM>
        <KM evidence="5">0.24 mM for 2-phenylethylamine</KM>
        <Vmax evidence="5">558.0 pmol/min/mg enzyme toward (R)-adrenaline</Vmax>
        <Vmax evidence="5">889.0 pmol/min/mg enzyme toward dopamine</Vmax>
        <Vmax evidence="5">997.0 pmol/min/mg enzyme toward serotonin</Vmax>
        <Vmax evidence="5">1213.0 pmol/min/mg enzyme toward (R)-noradrenaline</Vmax>
        <Vmax evidence="5">53.0 pmol/min/mg enzyme toward 2-phenylethylamine</Vmax>
        <Vmax evidence="5">258.0 pmol/min/mg enzyme toward tyramine</Vmax>
    </kinetics>
</comment>
<comment type="subunit">
    <text evidence="2">Monomer, homo- or heterodimer (containing two subunits of similar size). Each subunit contains a covalently bound flavin. Enzymatically active as monomer (By similarity).</text>
</comment>
<comment type="subcellular location">
    <subcellularLocation>
        <location evidence="3">Mitochondrion outer membrane</location>
        <topology evidence="3">Single-pass type IV membrane protein</topology>
        <orientation evidence="3">Cytoplasmic side</orientation>
    </subcellularLocation>
</comment>
<comment type="similarity">
    <text evidence="7">Belongs to the flavin monoamine oxidase family.</text>
</comment>
<comment type="online information" name="Protein Spotlight">
    <link uri="https://www.proteinspotlight.org/back_issues/172/"/>
    <text>Approaching happiness - Issue 172 of August 2015</text>
</comment>
<keyword id="KW-0002">3D-structure</keyword>
<keyword id="KW-0007">Acetylation</keyword>
<keyword id="KW-0128">Catecholamine metabolism</keyword>
<keyword id="KW-0274">FAD</keyword>
<keyword id="KW-0285">Flavoprotein</keyword>
<keyword id="KW-0472">Membrane</keyword>
<keyword id="KW-0496">Mitochondrion</keyword>
<keyword id="KW-1000">Mitochondrion outer membrane</keyword>
<keyword id="KW-0531">Neurotransmitter degradation</keyword>
<keyword id="KW-0560">Oxidoreductase</keyword>
<keyword id="KW-0597">Phosphoprotein</keyword>
<keyword id="KW-1185">Reference proteome</keyword>
<keyword id="KW-0812">Transmembrane</keyword>
<keyword id="KW-1133">Transmembrane helix</keyword>
<sequence>MTDLEKPNLAGHMFDVGLIGGGISGLAAAKLLSEYKINVLVLEARDRVGGRTYTVRNEHVKWVDVGGAYVGPTQNRILRLSKELGIETYKVNVNERLVQYVKGKTYPFRGAFPPVWNPLAYLDYNNLWRTMDEMGKEIPVDAPWQARHAQEWDKMTMKDLIDKICWTKTAREFAYLFVNINVTSEPHEVSALWFLWYVRQCGGTARIFSVTNGGQERKFVGGSGQVSEQIMGLLGDKVKLSSPVTYIDQTDDNIIVETLNHEHYECKYVISAIPPILTAKIHFKPELPPERNQLIQRLPMGAVIKCMVYYKEAFWKKKDYCGCMIIEDEEAPIAITLDDTKPDGSLPAIMGFILARKADRQAKLHKDIRKRKICELYAKVLGSQEALYPVHYEEKNWCEEQYSGGCYTAYFPPGIMTQYGRVIRQPVGRIYFAGTETATQWSGYMEGAVEAGERAAREVLNALGKVAKKDIWVEEPESKDVPAIEITHTFLERNLPSVPGLLKITGVSTSVALLCFVLYKIKKLPC</sequence>
<organism>
    <name type="scientific">Rattus norvegicus</name>
    <name type="common">Rat</name>
    <dbReference type="NCBI Taxonomy" id="10116"/>
    <lineage>
        <taxon>Eukaryota</taxon>
        <taxon>Metazoa</taxon>
        <taxon>Chordata</taxon>
        <taxon>Craniata</taxon>
        <taxon>Vertebrata</taxon>
        <taxon>Euteleostomi</taxon>
        <taxon>Mammalia</taxon>
        <taxon>Eutheria</taxon>
        <taxon>Euarchontoglires</taxon>
        <taxon>Glires</taxon>
        <taxon>Rodentia</taxon>
        <taxon>Myomorpha</taxon>
        <taxon>Muroidea</taxon>
        <taxon>Muridae</taxon>
        <taxon>Murinae</taxon>
        <taxon>Rattus</taxon>
    </lineage>
</organism>
<proteinExistence type="evidence at protein level"/>
<name>AOFA_RAT</name>
<evidence type="ECO:0000250" key="1"/>
<evidence type="ECO:0000250" key="2">
    <source>
        <dbReference type="UniProtKB" id="P21397"/>
    </source>
</evidence>
<evidence type="ECO:0000269" key="3">
    <source>
    </source>
</evidence>
<evidence type="ECO:0000269" key="4">
    <source>
    </source>
</evidence>
<evidence type="ECO:0000269" key="5">
    <source>
    </source>
</evidence>
<evidence type="ECO:0000269" key="6">
    <source>
    </source>
</evidence>
<evidence type="ECO:0000305" key="7"/>
<evidence type="ECO:0000305" key="8">
    <source>
    </source>
</evidence>
<evidence type="ECO:0000312" key="9">
    <source>
        <dbReference type="RGD" id="61898"/>
    </source>
</evidence>
<evidence type="ECO:0007744" key="10">
    <source>
    </source>
</evidence>
<evidence type="ECO:0007829" key="11">
    <source>
        <dbReference type="PDB" id="1O5W"/>
    </source>
</evidence>
<feature type="chain" id="PRO_0000099854" description="Amine oxidase [flavin-containing] A">
    <location>
        <begin position="1"/>
        <end position="526"/>
    </location>
</feature>
<feature type="topological domain" description="Cytoplasmic">
    <location>
        <begin position="1"/>
        <end position="497"/>
    </location>
</feature>
<feature type="transmembrane region" description="Helical; Anchor for type IV membrane protein">
    <location>
        <begin position="498"/>
        <end position="518"/>
    </location>
</feature>
<feature type="topological domain" description="Mitochondrial intermembrane">
    <location>
        <begin position="519"/>
        <end position="526"/>
    </location>
</feature>
<feature type="region of interest" description="Interaction with membrane phospholipid headgroups" evidence="1">
    <location>
        <begin position="520"/>
        <end position="522"/>
    </location>
</feature>
<feature type="site" description="Important for substrate specificity">
    <location>
        <position position="335"/>
    </location>
</feature>
<feature type="site" description="Important for catalytic activity" evidence="1">
    <location>
        <position position="374"/>
    </location>
</feature>
<feature type="modified residue" description="N-acetylmethionine" evidence="2">
    <location>
        <position position="1"/>
    </location>
</feature>
<feature type="modified residue" description="Phosphoserine" evidence="10">
    <location>
        <position position="383"/>
    </location>
</feature>
<feature type="modified residue" description="S-8alpha-FAD cysteine">
    <location>
        <position position="406"/>
    </location>
</feature>
<feature type="mutagenesis site" description="Lower affinity for serotonin and tyramine; no change for tryptamine." evidence="6">
    <original>F</original>
    <variation>A</variation>
    <location>
        <position position="208"/>
    </location>
</feature>
<feature type="mutagenesis site" description="Lower affinity for serotonin and tyramine; no change for tryptamine." evidence="6">
    <original>F</original>
    <variation>I</variation>
    <location>
        <position position="208"/>
    </location>
</feature>
<feature type="mutagenesis site" description="Lower affinity for serotonin and tyramine; no change for tryptamine." evidence="6">
    <original>F</original>
    <variation>V</variation>
    <location>
        <position position="208"/>
    </location>
</feature>
<feature type="mutagenesis site" description="No change in substrate affinity." evidence="6">
    <original>F</original>
    <variation>Y</variation>
    <location>
        <position position="208"/>
    </location>
</feature>
<feature type="sequence conflict" description="In Ref. 2; AAB23355." evidence="7" ref="2">
    <original>GL</original>
    <variation>VV</variation>
    <location>
        <begin position="17"/>
        <end position="18"/>
    </location>
</feature>
<feature type="sequence conflict" description="In Ref. 2; AAB23355." evidence="7" ref="2">
    <original>Q</original>
    <variation>L</variation>
    <location>
        <position position="361"/>
    </location>
</feature>
<feature type="sequence conflict" description="In Ref. 2; AAB23355." evidence="7" ref="2">
    <original>C</original>
    <variation>S</variation>
    <location>
        <position position="406"/>
    </location>
</feature>
<feature type="sequence conflict" description="In Ref. 2; AAB23355." evidence="7" ref="2">
    <original>A</original>
    <variation>R</variation>
    <location>
        <position position="451"/>
    </location>
</feature>
<feature type="strand" evidence="11">
    <location>
        <begin position="13"/>
        <end position="19"/>
    </location>
</feature>
<feature type="helix" evidence="11">
    <location>
        <begin position="23"/>
        <end position="34"/>
    </location>
</feature>
<feature type="strand" evidence="11">
    <location>
        <begin position="39"/>
        <end position="42"/>
    </location>
</feature>
<feature type="strand" evidence="11">
    <location>
        <begin position="44"/>
        <end position="48"/>
    </location>
</feature>
<feature type="turn" evidence="11">
    <location>
        <begin position="58"/>
        <end position="60"/>
    </location>
</feature>
<feature type="strand" evidence="11">
    <location>
        <begin position="63"/>
        <end position="66"/>
    </location>
</feature>
<feature type="helix" evidence="11">
    <location>
        <begin position="75"/>
        <end position="83"/>
    </location>
</feature>
<feature type="strand" evidence="11">
    <location>
        <begin position="88"/>
        <end position="90"/>
    </location>
</feature>
<feature type="strand" evidence="11">
    <location>
        <begin position="94"/>
        <end position="103"/>
    </location>
</feature>
<feature type="strand" evidence="11">
    <location>
        <begin position="105"/>
        <end position="108"/>
    </location>
</feature>
<feature type="strand" evidence="11">
    <location>
        <begin position="110"/>
        <end position="112"/>
    </location>
</feature>
<feature type="helix" evidence="11">
    <location>
        <begin position="118"/>
        <end position="136"/>
    </location>
</feature>
<feature type="helix" evidence="11">
    <location>
        <begin position="143"/>
        <end position="145"/>
    </location>
</feature>
<feature type="helix" evidence="11">
    <location>
        <begin position="149"/>
        <end position="152"/>
    </location>
</feature>
<feature type="helix" evidence="11">
    <location>
        <begin position="157"/>
        <end position="164"/>
    </location>
</feature>
<feature type="helix" evidence="11">
    <location>
        <begin position="168"/>
        <end position="182"/>
    </location>
</feature>
<feature type="turn" evidence="11">
    <location>
        <begin position="186"/>
        <end position="188"/>
    </location>
</feature>
<feature type="helix" evidence="11">
    <location>
        <begin position="191"/>
        <end position="200"/>
    </location>
</feature>
<feature type="helix" evidence="11">
    <location>
        <begin position="203"/>
        <end position="208"/>
    </location>
</feature>
<feature type="strand" evidence="11">
    <location>
        <begin position="210"/>
        <end position="213"/>
    </location>
</feature>
<feature type="strand" evidence="11">
    <location>
        <begin position="216"/>
        <end position="219"/>
    </location>
</feature>
<feature type="helix" evidence="11">
    <location>
        <begin position="225"/>
        <end position="232"/>
    </location>
</feature>
<feature type="helix" evidence="11">
    <location>
        <begin position="235"/>
        <end position="237"/>
    </location>
</feature>
<feature type="strand" evidence="11">
    <location>
        <begin position="238"/>
        <end position="241"/>
    </location>
</feature>
<feature type="strand" evidence="11">
    <location>
        <begin position="244"/>
        <end position="248"/>
    </location>
</feature>
<feature type="strand" evidence="11">
    <location>
        <begin position="250"/>
        <end position="261"/>
    </location>
</feature>
<feature type="strand" evidence="11">
    <location>
        <begin position="263"/>
        <end position="271"/>
    </location>
</feature>
<feature type="helix" evidence="11">
    <location>
        <begin position="275"/>
        <end position="280"/>
    </location>
</feature>
<feature type="strand" evidence="11">
    <location>
        <begin position="281"/>
        <end position="285"/>
    </location>
</feature>
<feature type="helix" evidence="11">
    <location>
        <begin position="289"/>
        <end position="294"/>
    </location>
</feature>
<feature type="strand" evidence="11">
    <location>
        <begin position="303"/>
        <end position="309"/>
    </location>
</feature>
<feature type="helix" evidence="11">
    <location>
        <begin position="316"/>
        <end position="318"/>
    </location>
</feature>
<feature type="strand" evidence="11">
    <location>
        <begin position="320"/>
        <end position="327"/>
    </location>
</feature>
<feature type="strand" evidence="11">
    <location>
        <begin position="334"/>
        <end position="338"/>
    </location>
</feature>
<feature type="strand" evidence="11">
    <location>
        <begin position="348"/>
        <end position="354"/>
    </location>
</feature>
<feature type="helix" evidence="11">
    <location>
        <begin position="355"/>
        <end position="362"/>
    </location>
</feature>
<feature type="helix" evidence="11">
    <location>
        <begin position="366"/>
        <end position="381"/>
    </location>
</feature>
<feature type="helix" evidence="11">
    <location>
        <begin position="384"/>
        <end position="387"/>
    </location>
</feature>
<feature type="strand" evidence="11">
    <location>
        <begin position="390"/>
        <end position="396"/>
    </location>
</feature>
<feature type="turn" evidence="11">
    <location>
        <begin position="397"/>
        <end position="399"/>
    </location>
</feature>
<feature type="turn" evidence="11">
    <location>
        <begin position="401"/>
        <end position="403"/>
    </location>
</feature>
<feature type="strand" evidence="11">
    <location>
        <begin position="405"/>
        <end position="407"/>
    </location>
</feature>
<feature type="turn" evidence="11">
    <location>
        <begin position="413"/>
        <end position="415"/>
    </location>
</feature>
<feature type="helix" evidence="11">
    <location>
        <begin position="416"/>
        <end position="419"/>
    </location>
</feature>
<feature type="helix" evidence="11">
    <location>
        <begin position="420"/>
        <end position="422"/>
    </location>
</feature>
<feature type="strand" evidence="11">
    <location>
        <begin position="428"/>
        <end position="432"/>
    </location>
</feature>
<feature type="helix" evidence="11">
    <location>
        <begin position="435"/>
        <end position="437"/>
    </location>
</feature>
<feature type="strand" evidence="11">
    <location>
        <begin position="439"/>
        <end position="441"/>
    </location>
</feature>
<feature type="helix" evidence="11">
    <location>
        <begin position="445"/>
        <end position="461"/>
    </location>
</feature>
<feature type="turn" evidence="11">
    <location>
        <begin position="462"/>
        <end position="464"/>
    </location>
</feature>
<feature type="strand" evidence="11">
    <location>
        <begin position="479"/>
        <end position="481"/>
    </location>
</feature>
<feature type="helix" evidence="11">
    <location>
        <begin position="490"/>
        <end position="494"/>
    </location>
</feature>
<feature type="helix" evidence="11">
    <location>
        <begin position="498"/>
        <end position="519"/>
    </location>
</feature>
<reference key="1">
    <citation type="journal article" date="1990" name="Agric. Biol. Chem.">
        <title>Primary structure of rat monoamine oxidase A deduced from cDNA and its expression in rat tissues.</title>
        <authorList>
            <person name="Kuwahara T."/>
            <person name="Takamoto S."/>
            <person name="Ito A."/>
        </authorList>
    </citation>
    <scope>NUCLEOTIDE SEQUENCE [MRNA]</scope>
</reference>
<reference key="2">
    <citation type="journal article" date="1992" name="Comp. Biochem. Physiol.">
        <title>cDNA cloning and sequencing of rat monoamine oxidase A: comparison with the human and bovine enzymes.</title>
        <authorList>
            <person name="Kwan S.W."/>
            <person name="Abell C.W."/>
        </authorList>
    </citation>
    <scope>NUCLEOTIDE SEQUENCE [MRNA] OF 7-526</scope>
    <source>
        <tissue>Liver</tissue>
    </source>
</reference>
<reference key="3">
    <citation type="journal article" date="1986" name="Neurochem. Int.">
        <title>The oxidation of adrenaline and noradrenaline by the two forms of monoamine oxidase from human and rat brain.</title>
        <authorList>
            <person name="O'Carroll A.M."/>
            <person name="Bardsley M.E."/>
            <person name="Tipton K.F."/>
        </authorList>
    </citation>
    <scope>FUNCTION</scope>
    <scope>CATALYTIC ACTIVITY</scope>
    <scope>BIOPHYSICOCHEMICAL PROPERTIES</scope>
</reference>
<reference key="4">
    <citation type="journal article" date="1997" name="J. Biol. Chem.">
        <title>A key amino acid responsible for substrate selectivity of monoamine oxidase A and B.</title>
        <authorList>
            <person name="Tsugeno Y."/>
            <person name="Ito A."/>
        </authorList>
    </citation>
    <scope>FUNCTION</scope>
    <scope>CATALYTIC ACTIVITY</scope>
    <scope>BIOPHYSICOCHEMICAL PROPERTIES</scope>
    <scope>MUTAGENESIS OF PHE-208</scope>
</reference>
<reference key="5">
    <citation type="journal article" date="2008" name="Proc. Natl. Acad. Sci. U.S.A.">
        <title>Structure of human monoamine oxidase A at 2.2-A resolution: the control of opening the entry for substrates/inhibitors.</title>
        <authorList>
            <person name="Son S.-Y."/>
            <person name="Ma J."/>
            <person name="Kondou Y."/>
            <person name="Yoshimura M."/>
            <person name="Yamashita E."/>
            <person name="Tsukihara T."/>
        </authorList>
    </citation>
    <scope>FUNCTION</scope>
    <scope>CATALYTIC ACTIVITY</scope>
    <scope>BIOPHYSICOCHEMICAL PROPERTIES</scope>
</reference>
<reference key="6">
    <citation type="journal article" date="2012" name="Nat. Commun.">
        <title>Quantitative maps of protein phosphorylation sites across 14 different rat organs and tissues.</title>
        <authorList>
            <person name="Lundby A."/>
            <person name="Secher A."/>
            <person name="Lage K."/>
            <person name="Nordsborg N.B."/>
            <person name="Dmytriyev A."/>
            <person name="Lundby C."/>
            <person name="Olsen J.V."/>
        </authorList>
    </citation>
    <scope>PHOSPHORYLATION [LARGE SCALE ANALYSIS] AT SER-383</scope>
    <scope>IDENTIFICATION BY MASS SPECTROMETRY [LARGE SCALE ANALYSIS]</scope>
</reference>
<reference key="7">
    <citation type="journal article" date="2004" name="J. Mol. Biol.">
        <title>Structure of rat monoamine oxidase A and its specific recognitions for substrates and inhibitors.</title>
        <authorList>
            <person name="Ma J."/>
            <person name="Yoshimura M."/>
            <person name="Yamashita E."/>
            <person name="Nakagawa A."/>
            <person name="Ito A."/>
            <person name="Tsukihara T."/>
        </authorList>
    </citation>
    <scope>X-RAY CRYSTALLOGRAPHY (3.2 ANGSTROMS) IN COMPLEX WITH INHIBITOR</scope>
    <scope>SUBUNIT</scope>
    <scope>COFACTOR</scope>
    <scope>SUBCELLULAR LOCATION</scope>
</reference>
<gene>
    <name evidence="9" type="primary">Maoa</name>
</gene>
<protein>
    <recommendedName>
        <fullName evidence="7">Amine oxidase [flavin-containing] A</fullName>
        <ecNumber evidence="4 5">1.4.3.21</ecNumber>
        <ecNumber evidence="5">1.4.3.4</ecNumber>
    </recommendedName>
    <alternativeName>
        <fullName>Monoamine oxidase type A</fullName>
        <shortName>MAO-A</shortName>
    </alternativeName>
</protein>
<accession>P21396</accession>
<accession>Q63817</accession>
<dbReference type="EC" id="1.4.3.21" evidence="4 5"/>
<dbReference type="EC" id="1.4.3.4" evidence="5"/>
<dbReference type="EMBL" id="D00688">
    <property type="protein sequence ID" value="BAA00592.1"/>
    <property type="molecule type" value="mRNA"/>
</dbReference>
<dbReference type="EMBL" id="S45812">
    <property type="protein sequence ID" value="AAB23355.2"/>
    <property type="molecule type" value="mRNA"/>
</dbReference>
<dbReference type="PIR" id="JT0528">
    <property type="entry name" value="JT0528"/>
</dbReference>
<dbReference type="PDB" id="1O5W">
    <property type="method" value="X-ray"/>
    <property type="resolution" value="3.20 A"/>
    <property type="chains" value="A/B/C/D=1-526"/>
</dbReference>
<dbReference type="PDBsum" id="1O5W"/>
<dbReference type="SMR" id="P21396"/>
<dbReference type="CORUM" id="P21396"/>
<dbReference type="FunCoup" id="P21396">
    <property type="interactions" value="844"/>
</dbReference>
<dbReference type="IntAct" id="P21396">
    <property type="interactions" value="1"/>
</dbReference>
<dbReference type="MINT" id="P21396"/>
<dbReference type="STRING" id="10116.ENSRNOP00000063784"/>
<dbReference type="BindingDB" id="P21396"/>
<dbReference type="ChEMBL" id="CHEMBL3358"/>
<dbReference type="DrugCentral" id="P21396"/>
<dbReference type="GlyGen" id="P21396">
    <property type="glycosylation" value="1 site"/>
</dbReference>
<dbReference type="iPTMnet" id="P21396"/>
<dbReference type="PhosphoSitePlus" id="P21396"/>
<dbReference type="jPOST" id="P21396"/>
<dbReference type="PaxDb" id="10116-ENSRNOP00000063784"/>
<dbReference type="UCSC" id="RGD:61898">
    <property type="organism name" value="rat"/>
</dbReference>
<dbReference type="AGR" id="RGD:61898"/>
<dbReference type="RGD" id="61898">
    <property type="gene designation" value="Maoa"/>
</dbReference>
<dbReference type="eggNOG" id="KOG0029">
    <property type="taxonomic scope" value="Eukaryota"/>
</dbReference>
<dbReference type="InParanoid" id="P21396"/>
<dbReference type="PhylomeDB" id="P21396"/>
<dbReference type="BioCyc" id="MetaCyc:MONOMER-14994"/>
<dbReference type="BRENDA" id="1.4.3.4">
    <property type="organism ID" value="5301"/>
</dbReference>
<dbReference type="Reactome" id="R-RNO-141333">
    <property type="pathway name" value="Biogenic amines are oxidatively deaminated to aldehydes by MAOA and MAOB"/>
</dbReference>
<dbReference type="Reactome" id="R-RNO-181430">
    <property type="pathway name" value="Norepinephrine Neurotransmitter Release Cycle"/>
</dbReference>
<dbReference type="Reactome" id="R-RNO-379397">
    <property type="pathway name" value="Enzymatic degradation of dopamine by COMT"/>
</dbReference>
<dbReference type="Reactome" id="R-RNO-379398">
    <property type="pathway name" value="Enzymatic degradation of Dopamine by monoamine oxidase"/>
</dbReference>
<dbReference type="Reactome" id="R-RNO-379401">
    <property type="pathway name" value="Dopamine clearance from the synaptic cleft"/>
</dbReference>
<dbReference type="Reactome" id="R-RNO-380612">
    <property type="pathway name" value="Metabolism of serotonin"/>
</dbReference>
<dbReference type="SABIO-RK" id="P21396"/>
<dbReference type="EvolutionaryTrace" id="P21396"/>
<dbReference type="PRO" id="PR:P21396"/>
<dbReference type="Proteomes" id="UP000002494">
    <property type="component" value="Unplaced"/>
</dbReference>
<dbReference type="GO" id="GO:0005741">
    <property type="term" value="C:mitochondrial outer membrane"/>
    <property type="evidence" value="ECO:0000314"/>
    <property type="project" value="RGD"/>
</dbReference>
<dbReference type="GO" id="GO:0005739">
    <property type="term" value="C:mitochondrion"/>
    <property type="evidence" value="ECO:0000318"/>
    <property type="project" value="GO_Central"/>
</dbReference>
<dbReference type="GO" id="GO:0050660">
    <property type="term" value="F:flavin adenine dinucleotide binding"/>
    <property type="evidence" value="ECO:0000314"/>
    <property type="project" value="RGD"/>
</dbReference>
<dbReference type="GO" id="GO:0097621">
    <property type="term" value="F:monoamine oxidase activity"/>
    <property type="evidence" value="ECO:0000314"/>
    <property type="project" value="UniProtKB"/>
</dbReference>
<dbReference type="GO" id="GO:0008131">
    <property type="term" value="F:primary methylamine oxidase activity"/>
    <property type="evidence" value="ECO:0000314"/>
    <property type="project" value="UniProtKB"/>
</dbReference>
<dbReference type="GO" id="GO:0051378">
    <property type="term" value="F:serotonin binding"/>
    <property type="evidence" value="ECO:0000314"/>
    <property type="project" value="RGD"/>
</dbReference>
<dbReference type="GO" id="GO:0042424">
    <property type="term" value="P:catecholamine catabolic process"/>
    <property type="evidence" value="ECO:0000303"/>
    <property type="project" value="RGD"/>
</dbReference>
<dbReference type="GO" id="GO:0042420">
    <property type="term" value="P:dopamine catabolic process"/>
    <property type="evidence" value="ECO:0000266"/>
    <property type="project" value="RGD"/>
</dbReference>
<dbReference type="GO" id="GO:0042443">
    <property type="term" value="P:phenylethylamine metabolic process"/>
    <property type="evidence" value="ECO:0000314"/>
    <property type="project" value="RGD"/>
</dbReference>
<dbReference type="GO" id="GO:0009967">
    <property type="term" value="P:positive regulation of signal transduction"/>
    <property type="evidence" value="ECO:0000266"/>
    <property type="project" value="RGD"/>
</dbReference>
<dbReference type="GO" id="GO:0042428">
    <property type="term" value="P:serotonin metabolic process"/>
    <property type="evidence" value="ECO:0000314"/>
    <property type="project" value="RGD"/>
</dbReference>
<dbReference type="FunFam" id="1.10.405.10:FF:000005">
    <property type="entry name" value="Amine oxidase [flavin-containing]"/>
    <property type="match status" value="1"/>
</dbReference>
<dbReference type="Gene3D" id="3.90.660.10">
    <property type="match status" value="1"/>
</dbReference>
<dbReference type="Gene3D" id="6.10.250.130">
    <property type="match status" value="1"/>
</dbReference>
<dbReference type="Gene3D" id="3.50.50.60">
    <property type="entry name" value="FAD/NAD(P)-binding domain"/>
    <property type="match status" value="1"/>
</dbReference>
<dbReference type="Gene3D" id="1.10.405.10">
    <property type="entry name" value="Guanine Nucleotide Dissociation Inhibitor, domain 1"/>
    <property type="match status" value="1"/>
</dbReference>
<dbReference type="InterPro" id="IPR002937">
    <property type="entry name" value="Amino_oxidase"/>
</dbReference>
<dbReference type="InterPro" id="IPR036188">
    <property type="entry name" value="FAD/NAD-bd_sf"/>
</dbReference>
<dbReference type="InterPro" id="IPR001613">
    <property type="entry name" value="Flavin_amine_oxidase"/>
</dbReference>
<dbReference type="InterPro" id="IPR050703">
    <property type="entry name" value="Flavin_MAO"/>
</dbReference>
<dbReference type="PANTHER" id="PTHR43563">
    <property type="entry name" value="AMINE OXIDASE"/>
    <property type="match status" value="1"/>
</dbReference>
<dbReference type="PANTHER" id="PTHR43563:SF11">
    <property type="entry name" value="AMINE OXIDASE [FLAVIN-CONTAINING] A"/>
    <property type="match status" value="1"/>
</dbReference>
<dbReference type="Pfam" id="PF01593">
    <property type="entry name" value="Amino_oxidase"/>
    <property type="match status" value="1"/>
</dbReference>
<dbReference type="PRINTS" id="PR00757">
    <property type="entry name" value="AMINEOXDASEF"/>
</dbReference>
<dbReference type="SUPFAM" id="SSF54373">
    <property type="entry name" value="FAD-linked reductases, C-terminal domain"/>
    <property type="match status" value="1"/>
</dbReference>
<dbReference type="SUPFAM" id="SSF51905">
    <property type="entry name" value="FAD/NAD(P)-binding domain"/>
    <property type="match status" value="1"/>
</dbReference>